<gene>
    <name evidence="1" type="primary">rpl37ae</name>
    <name type="ordered locus">APE_1443a</name>
    <name type="ORF">APES054</name>
</gene>
<keyword id="KW-0479">Metal-binding</keyword>
<keyword id="KW-1185">Reference proteome</keyword>
<keyword id="KW-0687">Ribonucleoprotein</keyword>
<keyword id="KW-0689">Ribosomal protein</keyword>
<keyword id="KW-0694">RNA-binding</keyword>
<keyword id="KW-0699">rRNA-binding</keyword>
<keyword id="KW-0862">Zinc</keyword>
<keyword id="KW-0863">Zinc-finger</keyword>
<sequence>MGRTKVVGPAGRYGPRYGVSVRKRVRDILARRYQPHECPFCGSTGTVRRVSVGVWSCRKCGNTWAGAAYTPRSGLAKYFKRYIVRG</sequence>
<feature type="chain" id="PRO_0000139839" description="Large ribosomal subunit protein eL43">
    <location>
        <begin position="1"/>
        <end position="86"/>
    </location>
</feature>
<feature type="zinc finger region" description="C4-type" evidence="1">
    <location>
        <begin position="38"/>
        <end position="60"/>
    </location>
</feature>
<feature type="binding site" evidence="1">
    <location>
        <position position="38"/>
    </location>
    <ligand>
        <name>Zn(2+)</name>
        <dbReference type="ChEBI" id="CHEBI:29105"/>
    </ligand>
</feature>
<feature type="binding site" evidence="1">
    <location>
        <position position="41"/>
    </location>
    <ligand>
        <name>Zn(2+)</name>
        <dbReference type="ChEBI" id="CHEBI:29105"/>
    </ligand>
</feature>
<feature type="binding site" evidence="1">
    <location>
        <position position="57"/>
    </location>
    <ligand>
        <name>Zn(2+)</name>
        <dbReference type="ChEBI" id="CHEBI:29105"/>
    </ligand>
</feature>
<feature type="binding site" evidence="1">
    <location>
        <position position="60"/>
    </location>
    <ligand>
        <name>Zn(2+)</name>
        <dbReference type="ChEBI" id="CHEBI:29105"/>
    </ligand>
</feature>
<evidence type="ECO:0000255" key="1">
    <source>
        <dbReference type="HAMAP-Rule" id="MF_00327"/>
    </source>
</evidence>
<evidence type="ECO:0000305" key="2"/>
<dbReference type="EMBL" id="BA000002">
    <property type="protein sequence ID" value="BAA80442.1"/>
    <property type="molecule type" value="Genomic_DNA"/>
</dbReference>
<dbReference type="PIR" id="D72623">
    <property type="entry name" value="D72623"/>
</dbReference>
<dbReference type="RefSeq" id="WP_010866374.1">
    <property type="nucleotide sequence ID" value="NC_000854.2"/>
</dbReference>
<dbReference type="SMR" id="Q9YC06"/>
<dbReference type="STRING" id="272557.APE_1443a"/>
<dbReference type="EnsemblBacteria" id="BAA80442">
    <property type="protein sequence ID" value="BAA80442"/>
    <property type="gene ID" value="APE_1443a"/>
</dbReference>
<dbReference type="GeneID" id="1446019"/>
<dbReference type="KEGG" id="ape:APE_1443a"/>
<dbReference type="eggNOG" id="arCOG04208">
    <property type="taxonomic scope" value="Archaea"/>
</dbReference>
<dbReference type="Proteomes" id="UP000002518">
    <property type="component" value="Chromosome"/>
</dbReference>
<dbReference type="GO" id="GO:1990904">
    <property type="term" value="C:ribonucleoprotein complex"/>
    <property type="evidence" value="ECO:0007669"/>
    <property type="project" value="UniProtKB-KW"/>
</dbReference>
<dbReference type="GO" id="GO:0005840">
    <property type="term" value="C:ribosome"/>
    <property type="evidence" value="ECO:0007669"/>
    <property type="project" value="UniProtKB-KW"/>
</dbReference>
<dbReference type="GO" id="GO:0070180">
    <property type="term" value="F:large ribosomal subunit rRNA binding"/>
    <property type="evidence" value="ECO:0007669"/>
    <property type="project" value="UniProtKB-UniRule"/>
</dbReference>
<dbReference type="GO" id="GO:0003735">
    <property type="term" value="F:structural constituent of ribosome"/>
    <property type="evidence" value="ECO:0007669"/>
    <property type="project" value="InterPro"/>
</dbReference>
<dbReference type="GO" id="GO:0008270">
    <property type="term" value="F:zinc ion binding"/>
    <property type="evidence" value="ECO:0007669"/>
    <property type="project" value="UniProtKB-UniRule"/>
</dbReference>
<dbReference type="GO" id="GO:0006412">
    <property type="term" value="P:translation"/>
    <property type="evidence" value="ECO:0007669"/>
    <property type="project" value="UniProtKB-UniRule"/>
</dbReference>
<dbReference type="Gene3D" id="2.20.25.30">
    <property type="match status" value="1"/>
</dbReference>
<dbReference type="HAMAP" id="MF_00327">
    <property type="entry name" value="Ribosomal_eL43"/>
    <property type="match status" value="1"/>
</dbReference>
<dbReference type="InterPro" id="IPR011331">
    <property type="entry name" value="Ribosomal_eL37/eL43"/>
</dbReference>
<dbReference type="InterPro" id="IPR002674">
    <property type="entry name" value="Ribosomal_eL43"/>
</dbReference>
<dbReference type="InterPro" id="IPR050522">
    <property type="entry name" value="Ribosomal_protein_eL43"/>
</dbReference>
<dbReference type="InterPro" id="IPR011332">
    <property type="entry name" value="Ribosomal_zn-bd"/>
</dbReference>
<dbReference type="NCBIfam" id="NF003058">
    <property type="entry name" value="PRK03976.1"/>
    <property type="match status" value="1"/>
</dbReference>
<dbReference type="PANTHER" id="PTHR48129">
    <property type="entry name" value="60S RIBOSOMAL PROTEIN L37A"/>
    <property type="match status" value="1"/>
</dbReference>
<dbReference type="PANTHER" id="PTHR48129:SF1">
    <property type="entry name" value="LARGE RIBOSOMAL SUBUNIT PROTEIN EL43"/>
    <property type="match status" value="1"/>
</dbReference>
<dbReference type="Pfam" id="PF01780">
    <property type="entry name" value="Ribosomal_L37ae"/>
    <property type="match status" value="1"/>
</dbReference>
<dbReference type="SUPFAM" id="SSF57829">
    <property type="entry name" value="Zn-binding ribosomal proteins"/>
    <property type="match status" value="1"/>
</dbReference>
<name>RL37A_AERPE</name>
<accession>Q9YC06</accession>
<protein>
    <recommendedName>
        <fullName evidence="1">Large ribosomal subunit protein eL43</fullName>
    </recommendedName>
    <alternativeName>
        <fullName evidence="2">50S ribosomal protein L37Ae</fullName>
    </alternativeName>
    <alternativeName>
        <fullName evidence="1">Ribosomal protein L43e</fullName>
    </alternativeName>
</protein>
<reference key="1">
    <citation type="journal article" date="1999" name="DNA Res.">
        <title>Complete genome sequence of an aerobic hyper-thermophilic crenarchaeon, Aeropyrum pernix K1.</title>
        <authorList>
            <person name="Kawarabayasi Y."/>
            <person name="Hino Y."/>
            <person name="Horikawa H."/>
            <person name="Yamazaki S."/>
            <person name="Haikawa Y."/>
            <person name="Jin-no K."/>
            <person name="Takahashi M."/>
            <person name="Sekine M."/>
            <person name="Baba S."/>
            <person name="Ankai A."/>
            <person name="Kosugi H."/>
            <person name="Hosoyama A."/>
            <person name="Fukui S."/>
            <person name="Nagai Y."/>
            <person name="Nishijima K."/>
            <person name="Nakazawa H."/>
            <person name="Takamiya M."/>
            <person name="Masuda S."/>
            <person name="Funahashi T."/>
            <person name="Tanaka T."/>
            <person name="Kudoh Y."/>
            <person name="Yamazaki J."/>
            <person name="Kushida N."/>
            <person name="Oguchi A."/>
            <person name="Aoki K."/>
            <person name="Kubota K."/>
            <person name="Nakamura Y."/>
            <person name="Nomura N."/>
            <person name="Sako Y."/>
            <person name="Kikuchi H."/>
        </authorList>
    </citation>
    <scope>NUCLEOTIDE SEQUENCE [LARGE SCALE GENOMIC DNA]</scope>
    <source>
        <strain>ATCC 700893 / DSM 11879 / JCM 9820 / NBRC 100138 / K1</strain>
    </source>
</reference>
<proteinExistence type="inferred from homology"/>
<comment type="function">
    <text evidence="1">Binds to the 23S rRNA.</text>
</comment>
<comment type="cofactor">
    <cofactor evidence="1">
        <name>Zn(2+)</name>
        <dbReference type="ChEBI" id="CHEBI:29105"/>
    </cofactor>
    <text evidence="1">Binds 1 zinc ion per subunit.</text>
</comment>
<comment type="subunit">
    <text evidence="1">Part of the 50S ribosomal subunit.</text>
</comment>
<comment type="similarity">
    <text evidence="1">Belongs to the eukaryotic ribosomal protein eL43 family. Putative zinc-binding subfamily.</text>
</comment>
<organism>
    <name type="scientific">Aeropyrum pernix (strain ATCC 700893 / DSM 11879 / JCM 9820 / NBRC 100138 / K1)</name>
    <dbReference type="NCBI Taxonomy" id="272557"/>
    <lineage>
        <taxon>Archaea</taxon>
        <taxon>Thermoproteota</taxon>
        <taxon>Thermoprotei</taxon>
        <taxon>Desulfurococcales</taxon>
        <taxon>Desulfurococcaceae</taxon>
        <taxon>Aeropyrum</taxon>
    </lineage>
</organism>